<keyword id="KW-0010">Activator</keyword>
<keyword id="KW-0238">DNA-binding</keyword>
<keyword id="KW-0244">Early protein</keyword>
<keyword id="KW-1035">Host cytoplasm</keyword>
<keyword id="KW-1048">Host nucleus</keyword>
<keyword id="KW-0945">Host-virus interaction</keyword>
<keyword id="KW-1090">Inhibition of host innate immune response by virus</keyword>
<keyword id="KW-0479">Metal-binding</keyword>
<keyword id="KW-1119">Modulation of host cell apoptosis by virus</keyword>
<keyword id="KW-1185">Reference proteome</keyword>
<keyword id="KW-0804">Transcription</keyword>
<keyword id="KW-0805">Transcription regulation</keyword>
<keyword id="KW-0899">Viral immunoevasion</keyword>
<keyword id="KW-0862">Zinc</keyword>
<keyword id="KW-0863">Zinc-finger</keyword>
<gene>
    <name evidence="1" type="primary">E6</name>
</gene>
<sequence>MGPCNPTNIFLLCKDYEVDFEDLRLTCVFCKNELTTEELLAFALKELSIVWRHNWPFGVCAPCLAREVKVRELRHWDHSCYGPTVEQTTGRSLAELYIRCHACSKPLSIQEKEHQVQAYIHFHYIAGQWTGRCCQCRGPCTARWQP</sequence>
<evidence type="ECO:0000255" key="1">
    <source>
        <dbReference type="HAMAP-Rule" id="MF_04006"/>
    </source>
</evidence>
<evidence type="ECO:0000305" key="2"/>
<name>VE6_HPV61</name>
<proteinExistence type="inferred from homology"/>
<protein>
    <recommendedName>
        <fullName evidence="1">Protein E6</fullName>
    </recommendedName>
</protein>
<accession>Q80948</accession>
<feature type="chain" id="PRO_0000133377" description="Protein E6">
    <location>
        <begin position="1"/>
        <end position="146"/>
    </location>
</feature>
<feature type="zinc finger region" evidence="1">
    <location>
        <begin position="27"/>
        <end position="63"/>
    </location>
</feature>
<feature type="zinc finger region" evidence="1">
    <location>
        <begin position="100"/>
        <end position="136"/>
    </location>
</feature>
<organism>
    <name type="scientific">Human papillomavirus type 61</name>
    <dbReference type="NCBI Taxonomy" id="37116"/>
    <lineage>
        <taxon>Viruses</taxon>
        <taxon>Monodnaviria</taxon>
        <taxon>Shotokuvirae</taxon>
        <taxon>Cossaviricota</taxon>
        <taxon>Papovaviricetes</taxon>
        <taxon>Zurhausenvirales</taxon>
        <taxon>Papillomaviridae</taxon>
        <taxon>Firstpapillomavirinae</taxon>
        <taxon>Alphapapillomavirus</taxon>
        <taxon>Alphapapillomavirus 3</taxon>
    </lineage>
</organism>
<reference key="1">
    <citation type="submission" date="1995-10" db="EMBL/GenBank/DDBJ databases">
        <authorList>
            <person name="Delius H."/>
        </authorList>
    </citation>
    <scope>NUCLEOTIDE SEQUENCE [GENOMIC DNA]</scope>
</reference>
<comment type="function">
    <text evidence="1">Plays a major role in the induction and maintenance of cellular transformation. E6 associates with host UBE3A/E6-AP ubiquitin-protein ligase and modulates its activity. Sequesters tumor suppressor TP53 in the host cytoplasm and modulates its activity by interacting with host EP300 that results in the reduction of TP53 acetylation and activation. In turn, apoptosis induced by DNA damage is inhibited. E6 also protects host keratinocytes from apoptosis by mediating the degradation of host BAK1. May also inhibit host immune response.</text>
</comment>
<comment type="subunit">
    <text evidence="1">Forms homodimers. Interacts with ubiquitin-protein ligase UBE3A/E6-AP; this interaction stimulates UBE3A ubiquitin activity. Interacts with host TP53 and EP300; this interaction inhibits TP53 activity.</text>
</comment>
<comment type="subcellular location">
    <subcellularLocation>
        <location evidence="1">Host cytoplasm</location>
    </subcellularLocation>
    <subcellularLocation>
        <location evidence="1">Host nucleus</location>
    </subcellularLocation>
</comment>
<comment type="miscellaneous">
    <text evidence="1">Belongs to the low risk human alphapapillomavirus family. The cancer-causing human papillomavirus E6 protein has a unique carboxy terminal PDZ domain containing substrate but low risk E6s do not possess this domain.</text>
</comment>
<comment type="similarity">
    <text evidence="2">Belongs to the papillomaviridae E6 protein family.</text>
</comment>
<dbReference type="EMBL" id="U31793">
    <property type="protein sequence ID" value="AAA79492.1"/>
    <property type="molecule type" value="Genomic_DNA"/>
</dbReference>
<dbReference type="RefSeq" id="NP_043444.1">
    <property type="nucleotide sequence ID" value="NC_001694.1"/>
</dbReference>
<dbReference type="SMR" id="Q80948"/>
<dbReference type="GeneID" id="1403312"/>
<dbReference type="KEGG" id="vg:1403312"/>
<dbReference type="Proteomes" id="UP000007670">
    <property type="component" value="Genome"/>
</dbReference>
<dbReference type="GO" id="GO:0030430">
    <property type="term" value="C:host cell cytoplasm"/>
    <property type="evidence" value="ECO:0007669"/>
    <property type="project" value="UniProtKB-SubCell"/>
</dbReference>
<dbReference type="GO" id="GO:0042025">
    <property type="term" value="C:host cell nucleus"/>
    <property type="evidence" value="ECO:0007669"/>
    <property type="project" value="UniProtKB-SubCell"/>
</dbReference>
<dbReference type="GO" id="GO:0003677">
    <property type="term" value="F:DNA binding"/>
    <property type="evidence" value="ECO:0007669"/>
    <property type="project" value="UniProtKB-UniRule"/>
</dbReference>
<dbReference type="GO" id="GO:0008270">
    <property type="term" value="F:zinc ion binding"/>
    <property type="evidence" value="ECO:0007669"/>
    <property type="project" value="UniProtKB-KW"/>
</dbReference>
<dbReference type="GO" id="GO:0006351">
    <property type="term" value="P:DNA-templated transcription"/>
    <property type="evidence" value="ECO:0007669"/>
    <property type="project" value="UniProtKB-UniRule"/>
</dbReference>
<dbReference type="GO" id="GO:0006355">
    <property type="term" value="P:regulation of DNA-templated transcription"/>
    <property type="evidence" value="ECO:0007669"/>
    <property type="project" value="UniProtKB-UniRule"/>
</dbReference>
<dbReference type="GO" id="GO:0052150">
    <property type="term" value="P:symbiont-mediated perturbation of host apoptosis"/>
    <property type="evidence" value="ECO:0007669"/>
    <property type="project" value="UniProtKB-KW"/>
</dbReference>
<dbReference type="GO" id="GO:0039648">
    <property type="term" value="P:symbiont-mediated perturbation of host ubiquitin-like protein modification"/>
    <property type="evidence" value="ECO:0007669"/>
    <property type="project" value="UniProtKB-UniRule"/>
</dbReference>
<dbReference type="GO" id="GO:0052170">
    <property type="term" value="P:symbiont-mediated suppression of host innate immune response"/>
    <property type="evidence" value="ECO:0007669"/>
    <property type="project" value="UniProtKB-KW"/>
</dbReference>
<dbReference type="GO" id="GO:0039502">
    <property type="term" value="P:symbiont-mediated suppression of host type I interferon-mediated signaling pathway"/>
    <property type="evidence" value="ECO:0007669"/>
    <property type="project" value="UniProtKB-UniRule"/>
</dbReference>
<dbReference type="Gene3D" id="3.30.240.40">
    <property type="entry name" value="E6 early regulatory protein"/>
    <property type="match status" value="2"/>
</dbReference>
<dbReference type="HAMAP" id="MF_04006">
    <property type="entry name" value="HPV_E6"/>
    <property type="match status" value="1"/>
</dbReference>
<dbReference type="InterPro" id="IPR001334">
    <property type="entry name" value="E6"/>
</dbReference>
<dbReference type="InterPro" id="IPR038575">
    <property type="entry name" value="E6_sf"/>
</dbReference>
<dbReference type="Pfam" id="PF00518">
    <property type="entry name" value="E6"/>
    <property type="match status" value="1"/>
</dbReference>
<dbReference type="SUPFAM" id="SSF161229">
    <property type="entry name" value="E6 C-terminal domain-like"/>
    <property type="match status" value="2"/>
</dbReference>
<organismHost>
    <name type="scientific">Homo sapiens</name>
    <name type="common">Human</name>
    <dbReference type="NCBI Taxonomy" id="9606"/>
</organismHost>